<gene>
    <name evidence="1" type="primary">nadE</name>
    <name type="ordered locus">RBAM_003360</name>
</gene>
<evidence type="ECO:0000255" key="1">
    <source>
        <dbReference type="HAMAP-Rule" id="MF_00193"/>
    </source>
</evidence>
<comment type="function">
    <text evidence="1">Catalyzes the ATP-dependent amidation of deamido-NAD to form NAD. Uses ammonia as a nitrogen source.</text>
</comment>
<comment type="catalytic activity">
    <reaction evidence="1">
        <text>deamido-NAD(+) + NH4(+) + ATP = AMP + diphosphate + NAD(+) + H(+)</text>
        <dbReference type="Rhea" id="RHEA:21188"/>
        <dbReference type="ChEBI" id="CHEBI:15378"/>
        <dbReference type="ChEBI" id="CHEBI:28938"/>
        <dbReference type="ChEBI" id="CHEBI:30616"/>
        <dbReference type="ChEBI" id="CHEBI:33019"/>
        <dbReference type="ChEBI" id="CHEBI:57540"/>
        <dbReference type="ChEBI" id="CHEBI:58437"/>
        <dbReference type="ChEBI" id="CHEBI:456215"/>
        <dbReference type="EC" id="6.3.1.5"/>
    </reaction>
</comment>
<comment type="pathway">
    <text evidence="1">Cofactor biosynthesis; NAD(+) biosynthesis; NAD(+) from deamido-NAD(+) (ammonia route): step 1/1.</text>
</comment>
<comment type="subunit">
    <text evidence="1">Homodimer.</text>
</comment>
<comment type="similarity">
    <text evidence="1">Belongs to the NAD synthetase family.</text>
</comment>
<name>NADE_BACVZ</name>
<protein>
    <recommendedName>
        <fullName evidence="1">NH(3)-dependent NAD(+) synthetase</fullName>
        <ecNumber evidence="1">6.3.1.5</ecNumber>
    </recommendedName>
</protein>
<reference key="1">
    <citation type="journal article" date="2007" name="Nat. Biotechnol.">
        <title>Comparative analysis of the complete genome sequence of the plant growth-promoting bacterium Bacillus amyloliquefaciens FZB42.</title>
        <authorList>
            <person name="Chen X.H."/>
            <person name="Koumoutsi A."/>
            <person name="Scholz R."/>
            <person name="Eisenreich A."/>
            <person name="Schneider K."/>
            <person name="Heinemeyer I."/>
            <person name="Morgenstern B."/>
            <person name="Voss B."/>
            <person name="Hess W.R."/>
            <person name="Reva O."/>
            <person name="Junge H."/>
            <person name="Voigt B."/>
            <person name="Jungblut P.R."/>
            <person name="Vater J."/>
            <person name="Suessmuth R."/>
            <person name="Liesegang H."/>
            <person name="Strittmatter A."/>
            <person name="Gottschalk G."/>
            <person name="Borriss R."/>
        </authorList>
    </citation>
    <scope>NUCLEOTIDE SEQUENCE [LARGE SCALE GENOMIC DNA]</scope>
    <source>
        <strain>DSM 23117 / BGSC 10A6 / LMG 26770 / FZB42</strain>
    </source>
</reference>
<proteinExistence type="inferred from homology"/>
<sequence>MSIQKQIMNDLHVKPSIDPKQEIEDRVNFLKQYLKKTGAKGFVLGISGGQDSTLAGRLAQLAAESIREEGGNAEFIAVRLPHGTQQDEDDAQMALKFIKPDKSWTFDIKSAVSAFTDQYKKDTGDQLSDFNKGNVKARMRMIAQYAIGGQEGLLVIGTDHAAEAVTGFFTKYGDGGADLLPLTGLTKRQGRRLLEELGAPERLYLKLPTADLLDEKPQQTDETELGITYNDIDDYLEGKDVSSEVIEALEKRYLSTEHKRQVPASMFDDWWK</sequence>
<organism>
    <name type="scientific">Bacillus velezensis (strain DSM 23117 / BGSC 10A6 / LMG 26770 / FZB42)</name>
    <name type="common">Bacillus amyloliquefaciens subsp. plantarum</name>
    <dbReference type="NCBI Taxonomy" id="326423"/>
    <lineage>
        <taxon>Bacteria</taxon>
        <taxon>Bacillati</taxon>
        <taxon>Bacillota</taxon>
        <taxon>Bacilli</taxon>
        <taxon>Bacillales</taxon>
        <taxon>Bacillaceae</taxon>
        <taxon>Bacillus</taxon>
        <taxon>Bacillus amyloliquefaciens group</taxon>
    </lineage>
</organism>
<dbReference type="EC" id="6.3.1.5" evidence="1"/>
<dbReference type="EMBL" id="CP000560">
    <property type="protein sequence ID" value="ABS72735.1"/>
    <property type="molecule type" value="Genomic_DNA"/>
</dbReference>
<dbReference type="RefSeq" id="WP_011996296.1">
    <property type="nucleotide sequence ID" value="NC_009725.2"/>
</dbReference>
<dbReference type="SMR" id="A7Z159"/>
<dbReference type="GeneID" id="93079474"/>
<dbReference type="KEGG" id="bay:RBAM_003360"/>
<dbReference type="HOGENOM" id="CLU_059327_3_0_9"/>
<dbReference type="UniPathway" id="UPA00253">
    <property type="reaction ID" value="UER00333"/>
</dbReference>
<dbReference type="Proteomes" id="UP000001120">
    <property type="component" value="Chromosome"/>
</dbReference>
<dbReference type="GO" id="GO:0005737">
    <property type="term" value="C:cytoplasm"/>
    <property type="evidence" value="ECO:0007669"/>
    <property type="project" value="InterPro"/>
</dbReference>
<dbReference type="GO" id="GO:0005524">
    <property type="term" value="F:ATP binding"/>
    <property type="evidence" value="ECO:0007669"/>
    <property type="project" value="UniProtKB-UniRule"/>
</dbReference>
<dbReference type="GO" id="GO:0004359">
    <property type="term" value="F:glutaminase activity"/>
    <property type="evidence" value="ECO:0007669"/>
    <property type="project" value="InterPro"/>
</dbReference>
<dbReference type="GO" id="GO:0046872">
    <property type="term" value="F:metal ion binding"/>
    <property type="evidence" value="ECO:0007669"/>
    <property type="project" value="UniProtKB-KW"/>
</dbReference>
<dbReference type="GO" id="GO:0003952">
    <property type="term" value="F:NAD+ synthase (glutamine-hydrolyzing) activity"/>
    <property type="evidence" value="ECO:0007669"/>
    <property type="project" value="InterPro"/>
</dbReference>
<dbReference type="GO" id="GO:0008795">
    <property type="term" value="F:NAD+ synthase activity"/>
    <property type="evidence" value="ECO:0007669"/>
    <property type="project" value="UniProtKB-UniRule"/>
</dbReference>
<dbReference type="GO" id="GO:0009435">
    <property type="term" value="P:NAD biosynthetic process"/>
    <property type="evidence" value="ECO:0007669"/>
    <property type="project" value="UniProtKB-UniRule"/>
</dbReference>
<dbReference type="CDD" id="cd00553">
    <property type="entry name" value="NAD_synthase"/>
    <property type="match status" value="1"/>
</dbReference>
<dbReference type="FunFam" id="3.40.50.620:FF:000015">
    <property type="entry name" value="NH(3)-dependent NAD(+) synthetase"/>
    <property type="match status" value="1"/>
</dbReference>
<dbReference type="Gene3D" id="3.40.50.620">
    <property type="entry name" value="HUPs"/>
    <property type="match status" value="1"/>
</dbReference>
<dbReference type="HAMAP" id="MF_00193">
    <property type="entry name" value="NadE_ammonia_dep"/>
    <property type="match status" value="1"/>
</dbReference>
<dbReference type="InterPro" id="IPR022310">
    <property type="entry name" value="NAD/GMP_synthase"/>
</dbReference>
<dbReference type="InterPro" id="IPR003694">
    <property type="entry name" value="NAD_synthase"/>
</dbReference>
<dbReference type="InterPro" id="IPR022926">
    <property type="entry name" value="NH(3)-dep_NAD(+)_synth"/>
</dbReference>
<dbReference type="InterPro" id="IPR014729">
    <property type="entry name" value="Rossmann-like_a/b/a_fold"/>
</dbReference>
<dbReference type="NCBIfam" id="TIGR00552">
    <property type="entry name" value="nadE"/>
    <property type="match status" value="1"/>
</dbReference>
<dbReference type="NCBIfam" id="NF001979">
    <property type="entry name" value="PRK00768.1"/>
    <property type="match status" value="1"/>
</dbReference>
<dbReference type="PANTHER" id="PTHR23090">
    <property type="entry name" value="NH 3 /GLUTAMINE-DEPENDENT NAD + SYNTHETASE"/>
    <property type="match status" value="1"/>
</dbReference>
<dbReference type="PANTHER" id="PTHR23090:SF7">
    <property type="entry name" value="NH(3)-DEPENDENT NAD(+) SYNTHETASE"/>
    <property type="match status" value="1"/>
</dbReference>
<dbReference type="Pfam" id="PF02540">
    <property type="entry name" value="NAD_synthase"/>
    <property type="match status" value="1"/>
</dbReference>
<dbReference type="SUPFAM" id="SSF52402">
    <property type="entry name" value="Adenine nucleotide alpha hydrolases-like"/>
    <property type="match status" value="1"/>
</dbReference>
<accession>A7Z159</accession>
<feature type="chain" id="PRO_1000077531" description="NH(3)-dependent NAD(+) synthetase">
    <location>
        <begin position="1"/>
        <end position="272"/>
    </location>
</feature>
<feature type="binding site" evidence="1">
    <location>
        <begin position="45"/>
        <end position="52"/>
    </location>
    <ligand>
        <name>ATP</name>
        <dbReference type="ChEBI" id="CHEBI:30616"/>
    </ligand>
</feature>
<feature type="binding site" evidence="1">
    <location>
        <position position="51"/>
    </location>
    <ligand>
        <name>Mg(2+)</name>
        <dbReference type="ChEBI" id="CHEBI:18420"/>
    </ligand>
</feature>
<feature type="binding site" evidence="1">
    <location>
        <position position="138"/>
    </location>
    <ligand>
        <name>deamido-NAD(+)</name>
        <dbReference type="ChEBI" id="CHEBI:58437"/>
    </ligand>
</feature>
<feature type="binding site" evidence="1">
    <location>
        <position position="158"/>
    </location>
    <ligand>
        <name>ATP</name>
        <dbReference type="ChEBI" id="CHEBI:30616"/>
    </ligand>
</feature>
<feature type="binding site" evidence="1">
    <location>
        <position position="163"/>
    </location>
    <ligand>
        <name>Mg(2+)</name>
        <dbReference type="ChEBI" id="CHEBI:18420"/>
    </ligand>
</feature>
<feature type="binding site" evidence="1">
    <location>
        <position position="171"/>
    </location>
    <ligand>
        <name>deamido-NAD(+)</name>
        <dbReference type="ChEBI" id="CHEBI:58437"/>
    </ligand>
</feature>
<feature type="binding site" evidence="1">
    <location>
        <position position="178"/>
    </location>
    <ligand>
        <name>deamido-NAD(+)</name>
        <dbReference type="ChEBI" id="CHEBI:58437"/>
    </ligand>
</feature>
<feature type="binding site" evidence="1">
    <location>
        <position position="187"/>
    </location>
    <ligand>
        <name>ATP</name>
        <dbReference type="ChEBI" id="CHEBI:30616"/>
    </ligand>
</feature>
<feature type="binding site" evidence="1">
    <location>
        <position position="209"/>
    </location>
    <ligand>
        <name>ATP</name>
        <dbReference type="ChEBI" id="CHEBI:30616"/>
    </ligand>
</feature>
<feature type="binding site" evidence="1">
    <location>
        <begin position="258"/>
        <end position="259"/>
    </location>
    <ligand>
        <name>deamido-NAD(+)</name>
        <dbReference type="ChEBI" id="CHEBI:58437"/>
    </ligand>
</feature>
<keyword id="KW-0067">ATP-binding</keyword>
<keyword id="KW-0436">Ligase</keyword>
<keyword id="KW-0460">Magnesium</keyword>
<keyword id="KW-0479">Metal-binding</keyword>
<keyword id="KW-0520">NAD</keyword>
<keyword id="KW-0547">Nucleotide-binding</keyword>